<dbReference type="EC" id="1.2.7.7"/>
<dbReference type="EMBL" id="CP001710">
    <property type="protein sequence ID" value="ADL58684.1"/>
    <property type="molecule type" value="Genomic_DNA"/>
</dbReference>
<dbReference type="RefSeq" id="WP_013295907.1">
    <property type="nucleotide sequence ID" value="NC_014408.1"/>
</dbReference>
<dbReference type="SMR" id="P80909"/>
<dbReference type="STRING" id="79929.MTBMA_c10900"/>
<dbReference type="PaxDb" id="79929-MTBMA_c10900"/>
<dbReference type="GeneID" id="92393709"/>
<dbReference type="GeneID" id="9704798"/>
<dbReference type="KEGG" id="mmg:MTBMA_c10900"/>
<dbReference type="PATRIC" id="fig|79929.8.peg.1068"/>
<dbReference type="HOGENOM" id="CLU_139698_5_3_2"/>
<dbReference type="OrthoDB" id="23833at2157"/>
<dbReference type="Proteomes" id="UP000000345">
    <property type="component" value="Chromosome"/>
</dbReference>
<dbReference type="GO" id="GO:0043807">
    <property type="term" value="F:3-methyl-2-oxobutanoate dehydrogenase (ferredoxin) activity"/>
    <property type="evidence" value="ECO:0007669"/>
    <property type="project" value="UniProtKB-EC"/>
</dbReference>
<dbReference type="GO" id="GO:0051539">
    <property type="term" value="F:4 iron, 4 sulfur cluster binding"/>
    <property type="evidence" value="ECO:0007669"/>
    <property type="project" value="UniProtKB-KW"/>
</dbReference>
<dbReference type="GO" id="GO:0046872">
    <property type="term" value="F:metal ion binding"/>
    <property type="evidence" value="ECO:0007669"/>
    <property type="project" value="UniProtKB-KW"/>
</dbReference>
<dbReference type="Gene3D" id="3.30.70.20">
    <property type="match status" value="1"/>
</dbReference>
<dbReference type="InterPro" id="IPR017896">
    <property type="entry name" value="4Fe4S_Fe-S-bd"/>
</dbReference>
<dbReference type="InterPro" id="IPR017900">
    <property type="entry name" value="4Fe4S_Fe_S_CS"/>
</dbReference>
<dbReference type="Pfam" id="PF12838">
    <property type="entry name" value="Fer4_7"/>
    <property type="match status" value="1"/>
</dbReference>
<dbReference type="SUPFAM" id="SSF54862">
    <property type="entry name" value="4Fe-4S ferredoxins"/>
    <property type="match status" value="1"/>
</dbReference>
<dbReference type="PROSITE" id="PS00198">
    <property type="entry name" value="4FE4S_FER_1"/>
    <property type="match status" value="2"/>
</dbReference>
<dbReference type="PROSITE" id="PS51379">
    <property type="entry name" value="4FE4S_FER_2"/>
    <property type="match status" value="2"/>
</dbReference>
<gene>
    <name type="primary">vorC</name>
    <name type="ordered locus">MTBMA_c10900</name>
</gene>
<evidence type="ECO:0000250" key="1"/>
<evidence type="ECO:0000255" key="2"/>
<evidence type="ECO:0000255" key="3">
    <source>
        <dbReference type="PROSITE-ProRule" id="PRU00711"/>
    </source>
</evidence>
<evidence type="ECO:0000269" key="4">
    <source>
    </source>
</evidence>
<evidence type="ECO:0000305" key="5"/>
<feature type="chain" id="PRO_0000099960" description="Ketoisovalerate oxidoreductase subunit VorC">
    <location>
        <begin position="1"/>
        <end position="79"/>
    </location>
</feature>
<feature type="domain" description="4Fe-4S ferredoxin-type 1" evidence="3">
    <location>
        <begin position="4"/>
        <end position="33"/>
    </location>
</feature>
<feature type="domain" description="4Fe-4S ferredoxin-type 2" evidence="3">
    <location>
        <begin position="40"/>
        <end position="70"/>
    </location>
</feature>
<feature type="binding site" evidence="2">
    <location>
        <position position="13"/>
    </location>
    <ligand>
        <name>[4Fe-4S] cluster</name>
        <dbReference type="ChEBI" id="CHEBI:49883"/>
        <label>1</label>
    </ligand>
</feature>
<feature type="binding site" evidence="2">
    <location>
        <position position="16"/>
    </location>
    <ligand>
        <name>[4Fe-4S] cluster</name>
        <dbReference type="ChEBI" id="CHEBI:49883"/>
        <label>1</label>
    </ligand>
</feature>
<feature type="binding site" evidence="2">
    <location>
        <position position="19"/>
    </location>
    <ligand>
        <name>[4Fe-4S] cluster</name>
        <dbReference type="ChEBI" id="CHEBI:49883"/>
        <label>1</label>
    </ligand>
</feature>
<feature type="binding site" evidence="2">
    <location>
        <position position="23"/>
    </location>
    <ligand>
        <name>[4Fe-4S] cluster</name>
        <dbReference type="ChEBI" id="CHEBI:49883"/>
        <label>2</label>
    </ligand>
</feature>
<feature type="binding site" evidence="2">
    <location>
        <position position="49"/>
    </location>
    <ligand>
        <name>[4Fe-4S] cluster</name>
        <dbReference type="ChEBI" id="CHEBI:49883"/>
        <label>2</label>
    </ligand>
</feature>
<feature type="binding site" evidence="2">
    <location>
        <position position="52"/>
    </location>
    <ligand>
        <name>[4Fe-4S] cluster</name>
        <dbReference type="ChEBI" id="CHEBI:49883"/>
        <label>2</label>
    </ligand>
</feature>
<feature type="binding site" evidence="2">
    <location>
        <position position="55"/>
    </location>
    <ligand>
        <name>[4Fe-4S] cluster</name>
        <dbReference type="ChEBI" id="CHEBI:49883"/>
        <label>2</label>
    </ligand>
</feature>
<feature type="binding site" evidence="2">
    <location>
        <position position="59"/>
    </location>
    <ligand>
        <name>[4Fe-4S] cluster</name>
        <dbReference type="ChEBI" id="CHEBI:49883"/>
        <label>1</label>
    </ligand>
</feature>
<feature type="sequence conflict" description="In Ref. 2; AA sequence." evidence="5" ref="2">
    <original>AC</original>
    <variation>QA</variation>
    <location>
        <begin position="22"/>
        <end position="23"/>
    </location>
</feature>
<sequence length="79" mass="9060">MKKAYPVINRVECKACERCIIACPRKVLYMSNKINERGYHYVEYRGEGCNGCGNCYYTCPEINAIEVHIERCEDGDTDG</sequence>
<reference key="1">
    <citation type="journal article" date="2010" name="J. Bacteriol.">
        <title>Complete genome sequence of Methanothermobacter marburgensis, a methanoarchaeon model organism.</title>
        <authorList>
            <person name="Liesegang H."/>
            <person name="Kaster A.K."/>
            <person name="Wiezer A."/>
            <person name="Goenrich M."/>
            <person name="Wollherr A."/>
            <person name="Seedorf H."/>
            <person name="Gottschalk G."/>
            <person name="Thauer R.K."/>
        </authorList>
    </citation>
    <scope>NUCLEOTIDE SEQUENCE [LARGE SCALE GENOMIC DNA]</scope>
    <source>
        <strain>ATCC BAA-927 / DSM 2133 / JCM 14651 / NBRC 100331 / OCM 82 / Marburg</strain>
    </source>
</reference>
<reference key="2">
    <citation type="journal article" date="1997" name="Eur. J. Biochem.">
        <title>Structures and functions of four anabolic 2-oxoacid oxidoreductases in Methanobacterium thermoautotrophicum.</title>
        <authorList>
            <person name="Tersteegen A."/>
            <person name="Linder D."/>
            <person name="Thauer R.K."/>
            <person name="Hedderich R."/>
        </authorList>
    </citation>
    <scope>PROTEIN SEQUENCE OF 1-24</scope>
    <scope>BIOPHYSICOCHEMICAL PROPERTIES</scope>
    <scope>SUBUNIT</scope>
    <source>
        <strain>ATCC BAA-927 / DSM 2133 / JCM 14651 / NBRC 100331 / OCM 82 / Marburg</strain>
    </source>
</reference>
<proteinExistence type="evidence at protein level"/>
<comment type="catalytic activity">
    <reaction>
        <text>3-methyl-2-oxobutanoate + 2 oxidized [2Fe-2S]-[ferredoxin] + CoA = 2-methylpropanoyl-CoA + 2 reduced [2Fe-2S]-[ferredoxin] + CO2 + H(+)</text>
        <dbReference type="Rhea" id="RHEA:11712"/>
        <dbReference type="Rhea" id="RHEA-COMP:10000"/>
        <dbReference type="Rhea" id="RHEA-COMP:10001"/>
        <dbReference type="ChEBI" id="CHEBI:11851"/>
        <dbReference type="ChEBI" id="CHEBI:15378"/>
        <dbReference type="ChEBI" id="CHEBI:16526"/>
        <dbReference type="ChEBI" id="CHEBI:33737"/>
        <dbReference type="ChEBI" id="CHEBI:33738"/>
        <dbReference type="ChEBI" id="CHEBI:57287"/>
        <dbReference type="ChEBI" id="CHEBI:57338"/>
        <dbReference type="EC" id="1.2.7.7"/>
    </reaction>
</comment>
<comment type="cofactor">
    <cofactor evidence="1">
        <name>[4Fe-4S] cluster</name>
        <dbReference type="ChEBI" id="CHEBI:49883"/>
    </cofactor>
    <text evidence="1">Binds 2 [4Fe-4S] clusters.</text>
</comment>
<comment type="biophysicochemical properties">
    <phDependence>
        <text evidence="4">Optimum pH is 9.7.</text>
    </phDependence>
    <temperatureDependence>
        <text evidence="4">Optimum temperature is 75 degrees Celsius.</text>
    </temperatureDependence>
</comment>
<comment type="subunit">
    <text evidence="4">Heterotrimer of the VorA, VorB and VorC subunits.</text>
</comment>
<name>VORC_METTM</name>
<protein>
    <recommendedName>
        <fullName>Ketoisovalerate oxidoreductase subunit VorC</fullName>
        <shortName>VOR</shortName>
        <ecNumber>1.2.7.7</ecNumber>
    </recommendedName>
    <alternativeName>
        <fullName>2-oxoisovalerate ferredoxin reductase subunit gamma</fullName>
    </alternativeName>
    <alternativeName>
        <fullName>2-oxoisovalerate oxidoreductase gamma chain</fullName>
    </alternativeName>
</protein>
<organism>
    <name type="scientific">Methanothermobacter marburgensis (strain ATCC BAA-927 / DSM 2133 / JCM 14651 / NBRC 100331 / OCM 82 / Marburg)</name>
    <name type="common">Methanobacterium thermoautotrophicum</name>
    <dbReference type="NCBI Taxonomy" id="79929"/>
    <lineage>
        <taxon>Archaea</taxon>
        <taxon>Methanobacteriati</taxon>
        <taxon>Methanobacteriota</taxon>
        <taxon>Methanomada group</taxon>
        <taxon>Methanobacteria</taxon>
        <taxon>Methanobacteriales</taxon>
        <taxon>Methanobacteriaceae</taxon>
        <taxon>Methanothermobacter</taxon>
    </lineage>
</organism>
<accession>P80909</accession>
<accession>D9PWT6</accession>
<keyword id="KW-0004">4Fe-4S</keyword>
<keyword id="KW-0903">Direct protein sequencing</keyword>
<keyword id="KW-0249">Electron transport</keyword>
<keyword id="KW-0408">Iron</keyword>
<keyword id="KW-0411">Iron-sulfur</keyword>
<keyword id="KW-0479">Metal-binding</keyword>
<keyword id="KW-0560">Oxidoreductase</keyword>
<keyword id="KW-0677">Repeat</keyword>
<keyword id="KW-0813">Transport</keyword>